<reference key="1">
    <citation type="journal article" date="2001" name="Nature">
        <title>Genome sequence of Yersinia pestis, the causative agent of plague.</title>
        <authorList>
            <person name="Parkhill J."/>
            <person name="Wren B.W."/>
            <person name="Thomson N.R."/>
            <person name="Titball R.W."/>
            <person name="Holden M.T.G."/>
            <person name="Prentice M.B."/>
            <person name="Sebaihia M."/>
            <person name="James K.D."/>
            <person name="Churcher C.M."/>
            <person name="Mungall K.L."/>
            <person name="Baker S."/>
            <person name="Basham D."/>
            <person name="Bentley S.D."/>
            <person name="Brooks K."/>
            <person name="Cerdeno-Tarraga A.-M."/>
            <person name="Chillingworth T."/>
            <person name="Cronin A."/>
            <person name="Davies R.M."/>
            <person name="Davis P."/>
            <person name="Dougan G."/>
            <person name="Feltwell T."/>
            <person name="Hamlin N."/>
            <person name="Holroyd S."/>
            <person name="Jagels K."/>
            <person name="Karlyshev A.V."/>
            <person name="Leather S."/>
            <person name="Moule S."/>
            <person name="Oyston P.C.F."/>
            <person name="Quail M.A."/>
            <person name="Rutherford K.M."/>
            <person name="Simmonds M."/>
            <person name="Skelton J."/>
            <person name="Stevens K."/>
            <person name="Whitehead S."/>
            <person name="Barrell B.G."/>
        </authorList>
    </citation>
    <scope>NUCLEOTIDE SEQUENCE [LARGE SCALE GENOMIC DNA]</scope>
    <source>
        <strain>CO-92 / Biovar Orientalis</strain>
    </source>
</reference>
<reference key="2">
    <citation type="journal article" date="2002" name="J. Bacteriol.">
        <title>Genome sequence of Yersinia pestis KIM.</title>
        <authorList>
            <person name="Deng W."/>
            <person name="Burland V."/>
            <person name="Plunkett G. III"/>
            <person name="Boutin A."/>
            <person name="Mayhew G.F."/>
            <person name="Liss P."/>
            <person name="Perna N.T."/>
            <person name="Rose D.J."/>
            <person name="Mau B."/>
            <person name="Zhou S."/>
            <person name="Schwartz D.C."/>
            <person name="Fetherston J.D."/>
            <person name="Lindler L.E."/>
            <person name="Brubaker R.R."/>
            <person name="Plano G.V."/>
            <person name="Straley S.C."/>
            <person name="McDonough K.A."/>
            <person name="Nilles M.L."/>
            <person name="Matson J.S."/>
            <person name="Blattner F.R."/>
            <person name="Perry R.D."/>
        </authorList>
    </citation>
    <scope>NUCLEOTIDE SEQUENCE [LARGE SCALE GENOMIC DNA]</scope>
    <source>
        <strain>KIM10+ / Biovar Mediaevalis</strain>
    </source>
</reference>
<reference key="3">
    <citation type="journal article" date="2004" name="DNA Res.">
        <title>Complete genome sequence of Yersinia pestis strain 91001, an isolate avirulent to humans.</title>
        <authorList>
            <person name="Song Y."/>
            <person name="Tong Z."/>
            <person name="Wang J."/>
            <person name="Wang L."/>
            <person name="Guo Z."/>
            <person name="Han Y."/>
            <person name="Zhang J."/>
            <person name="Pei D."/>
            <person name="Zhou D."/>
            <person name="Qin H."/>
            <person name="Pang X."/>
            <person name="Han Y."/>
            <person name="Zhai J."/>
            <person name="Li M."/>
            <person name="Cui B."/>
            <person name="Qi Z."/>
            <person name="Jin L."/>
            <person name="Dai R."/>
            <person name="Chen F."/>
            <person name="Li S."/>
            <person name="Ye C."/>
            <person name="Du Z."/>
            <person name="Lin W."/>
            <person name="Wang J."/>
            <person name="Yu J."/>
            <person name="Yang H."/>
            <person name="Wang J."/>
            <person name="Huang P."/>
            <person name="Yang R."/>
        </authorList>
    </citation>
    <scope>NUCLEOTIDE SEQUENCE [LARGE SCALE GENOMIC DNA]</scope>
    <source>
        <strain>91001 / Biovar Mediaevalis</strain>
    </source>
</reference>
<dbReference type="EC" id="5.1.1.3" evidence="1"/>
<dbReference type="EMBL" id="AL590842">
    <property type="protein sequence ID" value="CAL22494.1"/>
    <property type="molecule type" value="Genomic_DNA"/>
</dbReference>
<dbReference type="EMBL" id="AE009952">
    <property type="protein sequence ID" value="AAM83917.1"/>
    <property type="status" value="ALT_INIT"/>
    <property type="molecule type" value="Genomic_DNA"/>
</dbReference>
<dbReference type="EMBL" id="AE017042">
    <property type="protein sequence ID" value="AAS63309.1"/>
    <property type="status" value="ALT_INIT"/>
    <property type="molecule type" value="Genomic_DNA"/>
</dbReference>
<dbReference type="PIR" id="AC0476">
    <property type="entry name" value="AC0476"/>
</dbReference>
<dbReference type="RefSeq" id="WP_002228171.1">
    <property type="nucleotide sequence ID" value="NZ_WUCM01000072.1"/>
</dbReference>
<dbReference type="RefSeq" id="YP_002348784.1">
    <property type="nucleotide sequence ID" value="NC_003143.1"/>
</dbReference>
<dbReference type="SMR" id="Q8ZAA2"/>
<dbReference type="IntAct" id="Q8ZAA2">
    <property type="interactions" value="1"/>
</dbReference>
<dbReference type="STRING" id="214092.YPO3909"/>
<dbReference type="PaxDb" id="214092-YPO3909"/>
<dbReference type="EnsemblBacteria" id="AAS63309">
    <property type="protein sequence ID" value="AAS63309"/>
    <property type="gene ID" value="YP_3139"/>
</dbReference>
<dbReference type="GeneID" id="57974791"/>
<dbReference type="KEGG" id="ype:YPO3909"/>
<dbReference type="KEGG" id="ypk:y0326"/>
<dbReference type="KEGG" id="ypm:YP_3139"/>
<dbReference type="PATRIC" id="fig|214092.21.peg.4438"/>
<dbReference type="eggNOG" id="COG0796">
    <property type="taxonomic scope" value="Bacteria"/>
</dbReference>
<dbReference type="HOGENOM" id="CLU_052344_2_0_6"/>
<dbReference type="OrthoDB" id="9801055at2"/>
<dbReference type="UniPathway" id="UPA00219"/>
<dbReference type="Proteomes" id="UP000000815">
    <property type="component" value="Chromosome"/>
</dbReference>
<dbReference type="Proteomes" id="UP000001019">
    <property type="component" value="Chromosome"/>
</dbReference>
<dbReference type="Proteomes" id="UP000002490">
    <property type="component" value="Chromosome"/>
</dbReference>
<dbReference type="GO" id="GO:0008881">
    <property type="term" value="F:glutamate racemase activity"/>
    <property type="evidence" value="ECO:0000318"/>
    <property type="project" value="GO_Central"/>
</dbReference>
<dbReference type="GO" id="GO:0071555">
    <property type="term" value="P:cell wall organization"/>
    <property type="evidence" value="ECO:0007669"/>
    <property type="project" value="UniProtKB-KW"/>
</dbReference>
<dbReference type="GO" id="GO:0009252">
    <property type="term" value="P:peptidoglycan biosynthetic process"/>
    <property type="evidence" value="ECO:0000318"/>
    <property type="project" value="GO_Central"/>
</dbReference>
<dbReference type="GO" id="GO:0008360">
    <property type="term" value="P:regulation of cell shape"/>
    <property type="evidence" value="ECO:0007669"/>
    <property type="project" value="UniProtKB-KW"/>
</dbReference>
<dbReference type="FunFam" id="3.40.50.1860:FF:000002">
    <property type="entry name" value="Glutamate racemase"/>
    <property type="match status" value="1"/>
</dbReference>
<dbReference type="Gene3D" id="3.40.50.1860">
    <property type="match status" value="2"/>
</dbReference>
<dbReference type="HAMAP" id="MF_00258">
    <property type="entry name" value="Glu_racemase"/>
    <property type="match status" value="1"/>
</dbReference>
<dbReference type="InterPro" id="IPR015942">
    <property type="entry name" value="Asp/Glu/hydantoin_racemase"/>
</dbReference>
<dbReference type="InterPro" id="IPR001920">
    <property type="entry name" value="Asp/Glu_race"/>
</dbReference>
<dbReference type="InterPro" id="IPR018187">
    <property type="entry name" value="Asp/Glu_racemase_AS_1"/>
</dbReference>
<dbReference type="InterPro" id="IPR033134">
    <property type="entry name" value="Asp/Glu_racemase_AS_2"/>
</dbReference>
<dbReference type="InterPro" id="IPR004391">
    <property type="entry name" value="Glu_race"/>
</dbReference>
<dbReference type="NCBIfam" id="TIGR00067">
    <property type="entry name" value="glut_race"/>
    <property type="match status" value="1"/>
</dbReference>
<dbReference type="NCBIfam" id="NF002034">
    <property type="entry name" value="PRK00865.1-1"/>
    <property type="match status" value="1"/>
</dbReference>
<dbReference type="PANTHER" id="PTHR21198">
    <property type="entry name" value="GLUTAMATE RACEMASE"/>
    <property type="match status" value="1"/>
</dbReference>
<dbReference type="PANTHER" id="PTHR21198:SF2">
    <property type="entry name" value="GLUTAMATE RACEMASE"/>
    <property type="match status" value="1"/>
</dbReference>
<dbReference type="Pfam" id="PF01177">
    <property type="entry name" value="Asp_Glu_race"/>
    <property type="match status" value="1"/>
</dbReference>
<dbReference type="SUPFAM" id="SSF53681">
    <property type="entry name" value="Aspartate/glutamate racemase"/>
    <property type="match status" value="2"/>
</dbReference>
<dbReference type="PROSITE" id="PS00923">
    <property type="entry name" value="ASP_GLU_RACEMASE_1"/>
    <property type="match status" value="1"/>
</dbReference>
<dbReference type="PROSITE" id="PS00924">
    <property type="entry name" value="ASP_GLU_RACEMASE_2"/>
    <property type="match status" value="1"/>
</dbReference>
<evidence type="ECO:0000255" key="1">
    <source>
        <dbReference type="HAMAP-Rule" id="MF_00258"/>
    </source>
</evidence>
<evidence type="ECO:0000256" key="2">
    <source>
        <dbReference type="SAM" id="MobiDB-lite"/>
    </source>
</evidence>
<evidence type="ECO:0000305" key="3"/>
<sequence>MATKPQDANTTSREAITSKADSPPRPTALIFDSGVGGLSVYQEIRQLLPDLHYIYAFDNVAFPYGEKSGEFIVERVLEIVTAVQQRHPLAIVVIACNTASTVSLPALRERFAFPVVGVVPAIKPAVRLTRNGVVGLLATRATVHASYTLDLIARFATDCKIELLGSSELVEVAETKLHGGVVPLEVLKKILHPWLSMREPPDTIVLGCTHFPLLTEELAQVLPEGTRMVDSGAAIARRTAWLISSQENVISSQDENIAYCMALDEDTDALLPVLQSYGFPKLQKLPI</sequence>
<accession>Q8ZAA2</accession>
<accession>Q0WAA4</accession>
<feature type="chain" id="PRO_0000095534" description="Glutamate racemase">
    <location>
        <begin position="1"/>
        <end position="287"/>
    </location>
</feature>
<feature type="region of interest" description="Disordered" evidence="2">
    <location>
        <begin position="1"/>
        <end position="25"/>
    </location>
</feature>
<feature type="compositionally biased region" description="Polar residues" evidence="2">
    <location>
        <begin position="1"/>
        <end position="15"/>
    </location>
</feature>
<feature type="active site" description="Proton donor/acceptor" evidence="1">
    <location>
        <position position="96"/>
    </location>
</feature>
<feature type="active site" description="Proton donor/acceptor" evidence="1">
    <location>
        <position position="208"/>
    </location>
</feature>
<feature type="binding site" evidence="1">
    <location>
        <begin position="32"/>
        <end position="33"/>
    </location>
    <ligand>
        <name>substrate</name>
    </ligand>
</feature>
<feature type="binding site" evidence="1">
    <location>
        <begin position="64"/>
        <end position="65"/>
    </location>
    <ligand>
        <name>substrate</name>
    </ligand>
</feature>
<feature type="binding site" evidence="1">
    <location>
        <begin position="97"/>
        <end position="98"/>
    </location>
    <ligand>
        <name>substrate</name>
    </ligand>
</feature>
<feature type="binding site" evidence="1">
    <location>
        <begin position="209"/>
        <end position="210"/>
    </location>
    <ligand>
        <name>substrate</name>
    </ligand>
</feature>
<organism>
    <name type="scientific">Yersinia pestis</name>
    <dbReference type="NCBI Taxonomy" id="632"/>
    <lineage>
        <taxon>Bacteria</taxon>
        <taxon>Pseudomonadati</taxon>
        <taxon>Pseudomonadota</taxon>
        <taxon>Gammaproteobacteria</taxon>
        <taxon>Enterobacterales</taxon>
        <taxon>Yersiniaceae</taxon>
        <taxon>Yersinia</taxon>
    </lineage>
</organism>
<proteinExistence type="inferred from homology"/>
<name>MURI_YERPE</name>
<gene>
    <name evidence="1" type="primary">murI</name>
    <name type="ordered locus">YPO3909</name>
    <name type="ordered locus">y0326</name>
    <name type="ordered locus">YP_3139</name>
</gene>
<protein>
    <recommendedName>
        <fullName evidence="1">Glutamate racemase</fullName>
        <ecNumber evidence="1">5.1.1.3</ecNumber>
    </recommendedName>
</protein>
<comment type="function">
    <text evidence="1">Provides the (R)-glutamate required for cell wall biosynthesis.</text>
</comment>
<comment type="catalytic activity">
    <reaction evidence="1">
        <text>L-glutamate = D-glutamate</text>
        <dbReference type="Rhea" id="RHEA:12813"/>
        <dbReference type="ChEBI" id="CHEBI:29985"/>
        <dbReference type="ChEBI" id="CHEBI:29986"/>
        <dbReference type="EC" id="5.1.1.3"/>
    </reaction>
</comment>
<comment type="pathway">
    <text evidence="1">Cell wall biogenesis; peptidoglycan biosynthesis.</text>
</comment>
<comment type="similarity">
    <text evidence="1">Belongs to the aspartate/glutamate racemases family.</text>
</comment>
<comment type="sequence caution" evidence="3">
    <conflict type="erroneous initiation">
        <sequence resource="EMBL-CDS" id="AAM83917"/>
    </conflict>
</comment>
<comment type="sequence caution" evidence="3">
    <conflict type="erroneous initiation">
        <sequence resource="EMBL-CDS" id="AAS63309"/>
    </conflict>
</comment>
<keyword id="KW-0133">Cell shape</keyword>
<keyword id="KW-0961">Cell wall biogenesis/degradation</keyword>
<keyword id="KW-0413">Isomerase</keyword>
<keyword id="KW-0573">Peptidoglycan synthesis</keyword>
<keyword id="KW-1185">Reference proteome</keyword>